<keyword id="KW-0008">Acetylcholine receptor inhibiting toxin</keyword>
<keyword id="KW-0903">Direct protein sequencing</keyword>
<keyword id="KW-1015">Disulfide bond</keyword>
<keyword id="KW-0528">Neurotoxin</keyword>
<keyword id="KW-0629">Postsynaptic neurotoxin</keyword>
<keyword id="KW-0873">Pyrrolidone carboxylic acid</keyword>
<keyword id="KW-0964">Secreted</keyword>
<keyword id="KW-0800">Toxin</keyword>
<reference key="1">
    <citation type="journal article" date="2020" name="Toxins">
        <title>AlphaM-conotoxin MIIIJ blocks nicotinic acetylcholine receptors at neuromuscular junctions of frog and fish.</title>
        <authorList>
            <person name="Rybin M.J."/>
            <person name="O'Brien H."/>
            <person name="Ramiro I.B.L."/>
            <person name="Azam L."/>
            <person name="McIntosh J.M."/>
            <person name="Olivera B.M."/>
            <person name="Safavi-Hemami H."/>
            <person name="Yoshikami D."/>
        </authorList>
    </citation>
    <scope>PROTEIN SEQUENCE</scope>
    <scope>SYNTHESIS</scope>
    <scope>FUNCTION</scope>
    <scope>SUBCELLULAR LOCATION</scope>
    <scope>PYROGLUTAMATE FORMATION AT GLN-1</scope>
    <source>
        <tissue>Venom</tissue>
    </source>
</reference>
<comment type="function">
    <text evidence="2">Probable competitive antagonist of fish muscle acetylcholine receptor. Inhibits postsynaptic nicotinic acetylcholine receptors (nAChRs) from fish (zebrafish and goldfish) and frogs (IC(50)=0.1 uM). Protects these receptors from block by alpha-bungarotoxin and alpha-conotoxin EI. Does not block nAChRs at the neuromuscular junction of Rana pipiens. Shows a weak inhibition on mammalian adult and fetal muscle nAChRs (alpha-1-beta-1-delta-epsilon/CHRNA1-CHRNB1-CHRND-CHRNE and alpha-1 beta-1 gamma delta/CHRNA1-CHRNB1-CHRNG-CHRND) (IC(50)=3-45 uM). In vivo, induces paralysis in goldfish (Carassius auratus) but not mice.</text>
</comment>
<comment type="subcellular location">
    <subcellularLocation>
        <location evidence="2">Secreted</location>
    </subcellularLocation>
</comment>
<comment type="tissue specificity">
    <text evidence="5">Expressed by the venom duct.</text>
</comment>
<comment type="domain">
    <text evidence="4">The cysteine framework is III (CC-C-C-CC). Classified in the M-1 branch, since 1 residue stands between the fourth and the fifth cysteine residues.</text>
</comment>
<comment type="miscellaneous">
    <text evidence="2">Negative results: does not inhibit mammalian neuronal alpha-3-beta-4/CHRNA3-CHRNB4, alpha-4-beta-2/CHRNA4-CHRNB2 and alpha-9-alpha-10/CHRNA9-CHRNA10 nAChRs.</text>
</comment>
<comment type="similarity">
    <text evidence="4">Belongs to the conotoxin M superfamily.</text>
</comment>
<protein>
    <recommendedName>
        <fullName evidence="5">Conotoxin MIIIJ</fullName>
    </recommendedName>
    <alternativeName>
        <fullName evidence="3">AlphaM-MIIIJ</fullName>
    </alternativeName>
</protein>
<accession>P0DQM8</accession>
<dbReference type="GO" id="GO:0005576">
    <property type="term" value="C:extracellular region"/>
    <property type="evidence" value="ECO:0007669"/>
    <property type="project" value="UniProtKB-SubCell"/>
</dbReference>
<dbReference type="GO" id="GO:0035792">
    <property type="term" value="C:host cell postsynaptic membrane"/>
    <property type="evidence" value="ECO:0007669"/>
    <property type="project" value="UniProtKB-KW"/>
</dbReference>
<dbReference type="GO" id="GO:0030550">
    <property type="term" value="F:acetylcholine receptor inhibitor activity"/>
    <property type="evidence" value="ECO:0007669"/>
    <property type="project" value="UniProtKB-KW"/>
</dbReference>
<dbReference type="GO" id="GO:0090729">
    <property type="term" value="F:toxin activity"/>
    <property type="evidence" value="ECO:0007669"/>
    <property type="project" value="UniProtKB-KW"/>
</dbReference>
<sequence>QKCCSGGSCPLYFRDRLICPCC</sequence>
<feature type="peptide" id="PRO_0000450817" description="Conotoxin MIIIJ" evidence="2">
    <location>
        <begin position="1"/>
        <end position="22"/>
    </location>
</feature>
<feature type="modified residue" description="Pyrrolidone carboxylic acid" evidence="2">
    <location>
        <position position="1"/>
    </location>
</feature>
<feature type="disulfide bond" evidence="1">
    <location>
        <begin position="3"/>
        <end position="21"/>
    </location>
</feature>
<feature type="disulfide bond" evidence="1">
    <location>
        <begin position="4"/>
        <end position="19"/>
    </location>
</feature>
<feature type="disulfide bond" evidence="1">
    <location>
        <begin position="9"/>
        <end position="22"/>
    </location>
</feature>
<organism>
    <name type="scientific">Conus magus</name>
    <name type="common">Magical cone</name>
    <dbReference type="NCBI Taxonomy" id="6492"/>
    <lineage>
        <taxon>Eukaryota</taxon>
        <taxon>Metazoa</taxon>
        <taxon>Spiralia</taxon>
        <taxon>Lophotrochozoa</taxon>
        <taxon>Mollusca</taxon>
        <taxon>Gastropoda</taxon>
        <taxon>Caenogastropoda</taxon>
        <taxon>Neogastropoda</taxon>
        <taxon>Conoidea</taxon>
        <taxon>Conidae</taxon>
        <taxon>Conus</taxon>
        <taxon>Pionoconus</taxon>
    </lineage>
</organism>
<name>CM3J_CONMA</name>
<evidence type="ECO:0000250" key="1">
    <source>
        <dbReference type="UniProtKB" id="Q5EHP3"/>
    </source>
</evidence>
<evidence type="ECO:0000269" key="2">
    <source>
    </source>
</evidence>
<evidence type="ECO:0000303" key="3">
    <source>
    </source>
</evidence>
<evidence type="ECO:0000305" key="4"/>
<evidence type="ECO:0000305" key="5">
    <source>
    </source>
</evidence>
<proteinExistence type="evidence at protein level"/>